<sequence>MSIIRSERYSAIFLLCSAALAIIFANVLDPDTWHAVHSAVSEYHIFGLITPHDIVADFLLAVFFFAVAIELKHELVKGELSSFSKAIIPGVCAAGGILVPISIYLSVASVLPNGWPVPTATDVAFSLGILAIFGSSLPSKVRIFLLALAVLDDLAGIVIIATAFSVSISYWWIIVACITVGLFGFCSYRLARCKTSKTFLIIPAMLLCALAAWVSVYQSGIHATIAGVMLGIMLNRKQGAAIEHALEPYINGIILPAFAFLAAMVRVPHLPLDEISPALWGILLGLLFGKLLGISVFGIIALKFFRKKSISFFNLLVVSALGGIGFTVSLLMNELAFLGTPVHEQGVIAVLIGSLLSAILAIILMRCYKGRKSKSLPGTKGRVSH</sequence>
<gene>
    <name evidence="1" type="primary">nhaA</name>
    <name type="ordered locus">TWT_786</name>
</gene>
<name>NHAA_TROWT</name>
<dbReference type="EMBL" id="AE014184">
    <property type="protein sequence ID" value="AAO44883.1"/>
    <property type="molecule type" value="Genomic_DNA"/>
</dbReference>
<dbReference type="RefSeq" id="WP_011102787.1">
    <property type="nucleotide sequence ID" value="NC_004572.3"/>
</dbReference>
<dbReference type="SMR" id="Q83MP1"/>
<dbReference type="STRING" id="203267.TWT_786"/>
<dbReference type="KEGG" id="twh:TWT_786"/>
<dbReference type="eggNOG" id="COG3004">
    <property type="taxonomic scope" value="Bacteria"/>
</dbReference>
<dbReference type="HOGENOM" id="CLU_015803_1_2_11"/>
<dbReference type="OrthoDB" id="9808135at2"/>
<dbReference type="Proteomes" id="UP000002200">
    <property type="component" value="Chromosome"/>
</dbReference>
<dbReference type="GO" id="GO:0005886">
    <property type="term" value="C:plasma membrane"/>
    <property type="evidence" value="ECO:0007669"/>
    <property type="project" value="UniProtKB-SubCell"/>
</dbReference>
<dbReference type="GO" id="GO:0015385">
    <property type="term" value="F:sodium:proton antiporter activity"/>
    <property type="evidence" value="ECO:0007669"/>
    <property type="project" value="TreeGrafter"/>
</dbReference>
<dbReference type="GO" id="GO:0006885">
    <property type="term" value="P:regulation of pH"/>
    <property type="evidence" value="ECO:0007669"/>
    <property type="project" value="InterPro"/>
</dbReference>
<dbReference type="Gene3D" id="1.20.1530.10">
    <property type="entry name" value="Na+/H+ antiporter like domain"/>
    <property type="match status" value="1"/>
</dbReference>
<dbReference type="HAMAP" id="MF_01844">
    <property type="entry name" value="NhaA"/>
    <property type="match status" value="1"/>
</dbReference>
<dbReference type="InterPro" id="IPR023171">
    <property type="entry name" value="Na/H_antiporter_dom_sf"/>
</dbReference>
<dbReference type="InterPro" id="IPR004670">
    <property type="entry name" value="NhaA"/>
</dbReference>
<dbReference type="PANTHER" id="PTHR30341:SF0">
    <property type="entry name" value="NA(+)_H(+) ANTIPORTER NHAA"/>
    <property type="match status" value="1"/>
</dbReference>
<dbReference type="PANTHER" id="PTHR30341">
    <property type="entry name" value="SODIUM ION/PROTON ANTIPORTER NHAA-RELATED"/>
    <property type="match status" value="1"/>
</dbReference>
<dbReference type="Pfam" id="PF06965">
    <property type="entry name" value="Na_H_antiport_1"/>
    <property type="match status" value="1"/>
</dbReference>
<feature type="chain" id="PRO_0000334454" description="Na(+)/H(+) antiporter NhaA">
    <location>
        <begin position="1"/>
        <end position="385"/>
    </location>
</feature>
<feature type="transmembrane region" description="Helical" evidence="1">
    <location>
        <begin position="9"/>
        <end position="29"/>
    </location>
</feature>
<feature type="transmembrane region" description="Helical" evidence="1">
    <location>
        <begin position="45"/>
        <end position="65"/>
    </location>
</feature>
<feature type="transmembrane region" description="Helical" evidence="1">
    <location>
        <begin position="87"/>
        <end position="107"/>
    </location>
</feature>
<feature type="transmembrane region" description="Helical" evidence="1">
    <location>
        <begin position="114"/>
        <end position="134"/>
    </location>
</feature>
<feature type="transmembrane region" description="Helical" evidence="1">
    <location>
        <begin position="155"/>
        <end position="175"/>
    </location>
</feature>
<feature type="transmembrane region" description="Helical" evidence="1">
    <location>
        <begin position="198"/>
        <end position="218"/>
    </location>
</feature>
<feature type="transmembrane region" description="Helical" evidence="1">
    <location>
        <begin position="220"/>
        <end position="235"/>
    </location>
</feature>
<feature type="transmembrane region" description="Helical" evidence="1">
    <location>
        <begin position="245"/>
        <end position="265"/>
    </location>
</feature>
<feature type="transmembrane region" description="Helical" evidence="1">
    <location>
        <begin position="282"/>
        <end position="302"/>
    </location>
</feature>
<feature type="transmembrane region" description="Helical" evidence="1">
    <location>
        <begin position="312"/>
        <end position="332"/>
    </location>
</feature>
<feature type="transmembrane region" description="Helical" evidence="1">
    <location>
        <begin position="345"/>
        <end position="365"/>
    </location>
</feature>
<proteinExistence type="inferred from homology"/>
<accession>Q83MP1</accession>
<keyword id="KW-0050">Antiport</keyword>
<keyword id="KW-1003">Cell membrane</keyword>
<keyword id="KW-0406">Ion transport</keyword>
<keyword id="KW-0472">Membrane</keyword>
<keyword id="KW-1185">Reference proteome</keyword>
<keyword id="KW-0915">Sodium</keyword>
<keyword id="KW-0739">Sodium transport</keyword>
<keyword id="KW-0812">Transmembrane</keyword>
<keyword id="KW-1133">Transmembrane helix</keyword>
<keyword id="KW-0813">Transport</keyword>
<evidence type="ECO:0000255" key="1">
    <source>
        <dbReference type="HAMAP-Rule" id="MF_01844"/>
    </source>
</evidence>
<organism>
    <name type="scientific">Tropheryma whipplei (strain Twist)</name>
    <name type="common">Whipple's bacillus</name>
    <dbReference type="NCBI Taxonomy" id="203267"/>
    <lineage>
        <taxon>Bacteria</taxon>
        <taxon>Bacillati</taxon>
        <taxon>Actinomycetota</taxon>
        <taxon>Actinomycetes</taxon>
        <taxon>Micrococcales</taxon>
        <taxon>Tropherymataceae</taxon>
        <taxon>Tropheryma</taxon>
    </lineage>
</organism>
<protein>
    <recommendedName>
        <fullName evidence="1">Na(+)/H(+) antiporter NhaA</fullName>
    </recommendedName>
    <alternativeName>
        <fullName evidence="1">Sodium/proton antiporter NhaA</fullName>
    </alternativeName>
</protein>
<reference key="1">
    <citation type="journal article" date="2003" name="Genome Res.">
        <title>Tropheryma whipplei twist: a human pathogenic Actinobacteria with a reduced genome.</title>
        <authorList>
            <person name="Raoult D."/>
            <person name="Ogata H."/>
            <person name="Audic S."/>
            <person name="Robert C."/>
            <person name="Suhre K."/>
            <person name="Drancourt M."/>
            <person name="Claverie J.-M."/>
        </authorList>
    </citation>
    <scope>NUCLEOTIDE SEQUENCE [LARGE SCALE GENOMIC DNA]</scope>
    <source>
        <strain>Twist</strain>
    </source>
</reference>
<comment type="function">
    <text evidence="1">Na(+)/H(+) antiporter that extrudes sodium in exchange for external protons.</text>
</comment>
<comment type="catalytic activity">
    <reaction evidence="1">
        <text>Na(+)(in) + 2 H(+)(out) = Na(+)(out) + 2 H(+)(in)</text>
        <dbReference type="Rhea" id="RHEA:29251"/>
        <dbReference type="ChEBI" id="CHEBI:15378"/>
        <dbReference type="ChEBI" id="CHEBI:29101"/>
    </reaction>
    <physiologicalReaction direction="left-to-right" evidence="1">
        <dbReference type="Rhea" id="RHEA:29252"/>
    </physiologicalReaction>
</comment>
<comment type="subcellular location">
    <subcellularLocation>
        <location evidence="1">Cell membrane</location>
        <topology evidence="1">Multi-pass membrane protein</topology>
    </subcellularLocation>
</comment>
<comment type="similarity">
    <text evidence="1">Belongs to the NhaA Na(+)/H(+) (TC 2.A.33) antiporter family.</text>
</comment>